<organism>
    <name type="scientific">Homo sapiens</name>
    <name type="common">Human</name>
    <dbReference type="NCBI Taxonomy" id="9606"/>
    <lineage>
        <taxon>Eukaryota</taxon>
        <taxon>Metazoa</taxon>
        <taxon>Chordata</taxon>
        <taxon>Craniata</taxon>
        <taxon>Vertebrata</taxon>
        <taxon>Euteleostomi</taxon>
        <taxon>Mammalia</taxon>
        <taxon>Eutheria</taxon>
        <taxon>Euarchontoglires</taxon>
        <taxon>Primates</taxon>
        <taxon>Haplorrhini</taxon>
        <taxon>Catarrhini</taxon>
        <taxon>Hominidae</taxon>
        <taxon>Homo</taxon>
    </lineage>
</organism>
<dbReference type="EMBL" id="M61951">
    <property type="protein sequence ID" value="AAA59486.1"/>
    <property type="molecule type" value="Genomic_DNA"/>
</dbReference>
<dbReference type="EMBL" id="M58147">
    <property type="protein sequence ID" value="AAA59486.1"/>
    <property type="status" value="JOINED"/>
    <property type="molecule type" value="Genomic_DNA"/>
</dbReference>
<dbReference type="EMBL" id="M61917">
    <property type="protein sequence ID" value="AAA59486.1"/>
    <property type="status" value="JOINED"/>
    <property type="molecule type" value="Genomic_DNA"/>
</dbReference>
<dbReference type="EMBL" id="M61918">
    <property type="protein sequence ID" value="AAA59486.1"/>
    <property type="status" value="JOINED"/>
    <property type="molecule type" value="Genomic_DNA"/>
</dbReference>
<dbReference type="EMBL" id="M61921">
    <property type="protein sequence ID" value="AAA59486.1"/>
    <property type="status" value="JOINED"/>
    <property type="molecule type" value="Genomic_DNA"/>
</dbReference>
<dbReference type="EMBL" id="M61922">
    <property type="protein sequence ID" value="AAA59486.1"/>
    <property type="status" value="JOINED"/>
    <property type="molecule type" value="Genomic_DNA"/>
</dbReference>
<dbReference type="EMBL" id="M61923">
    <property type="protein sequence ID" value="AAA59486.1"/>
    <property type="status" value="JOINED"/>
    <property type="molecule type" value="Genomic_DNA"/>
</dbReference>
<dbReference type="EMBL" id="M61924">
    <property type="protein sequence ID" value="AAA59486.1"/>
    <property type="status" value="JOINED"/>
    <property type="molecule type" value="Genomic_DNA"/>
</dbReference>
<dbReference type="EMBL" id="M61925">
    <property type="protein sequence ID" value="AAA59486.1"/>
    <property type="status" value="JOINED"/>
    <property type="molecule type" value="Genomic_DNA"/>
</dbReference>
<dbReference type="EMBL" id="M61926">
    <property type="protein sequence ID" value="AAA59486.1"/>
    <property type="status" value="JOINED"/>
    <property type="molecule type" value="Genomic_DNA"/>
</dbReference>
<dbReference type="EMBL" id="M61927">
    <property type="protein sequence ID" value="AAA59486.1"/>
    <property type="status" value="JOINED"/>
    <property type="molecule type" value="Genomic_DNA"/>
</dbReference>
<dbReference type="EMBL" id="M61928">
    <property type="protein sequence ID" value="AAA59486.1"/>
    <property type="status" value="JOINED"/>
    <property type="molecule type" value="Genomic_DNA"/>
</dbReference>
<dbReference type="EMBL" id="M61929">
    <property type="protein sequence ID" value="AAA59486.1"/>
    <property type="status" value="JOINED"/>
    <property type="molecule type" value="Genomic_DNA"/>
</dbReference>
<dbReference type="EMBL" id="M61930">
    <property type="protein sequence ID" value="AAA59486.1"/>
    <property type="status" value="JOINED"/>
    <property type="molecule type" value="Genomic_DNA"/>
</dbReference>
<dbReference type="EMBL" id="M61931">
    <property type="protein sequence ID" value="AAA59486.1"/>
    <property type="status" value="JOINED"/>
    <property type="molecule type" value="Genomic_DNA"/>
</dbReference>
<dbReference type="EMBL" id="M61932">
    <property type="protein sequence ID" value="AAA59486.1"/>
    <property type="status" value="JOINED"/>
    <property type="molecule type" value="Genomic_DNA"/>
</dbReference>
<dbReference type="EMBL" id="M61933">
    <property type="protein sequence ID" value="AAA59486.1"/>
    <property type="status" value="JOINED"/>
    <property type="molecule type" value="Genomic_DNA"/>
</dbReference>
<dbReference type="EMBL" id="M61934">
    <property type="protein sequence ID" value="AAA59486.1"/>
    <property type="status" value="JOINED"/>
    <property type="molecule type" value="Genomic_DNA"/>
</dbReference>
<dbReference type="EMBL" id="M61935">
    <property type="protein sequence ID" value="AAA59486.1"/>
    <property type="status" value="JOINED"/>
    <property type="molecule type" value="Genomic_DNA"/>
</dbReference>
<dbReference type="EMBL" id="M61936">
    <property type="protein sequence ID" value="AAA59486.1"/>
    <property type="status" value="JOINED"/>
    <property type="molecule type" value="Genomic_DNA"/>
</dbReference>
<dbReference type="EMBL" id="M61938">
    <property type="protein sequence ID" value="AAA59486.1"/>
    <property type="status" value="JOINED"/>
    <property type="molecule type" value="Genomic_DNA"/>
</dbReference>
<dbReference type="EMBL" id="M61939">
    <property type="protein sequence ID" value="AAA59486.1"/>
    <property type="status" value="JOINED"/>
    <property type="molecule type" value="Genomic_DNA"/>
</dbReference>
<dbReference type="EMBL" id="M61940">
    <property type="protein sequence ID" value="AAA59486.1"/>
    <property type="status" value="JOINED"/>
    <property type="molecule type" value="Genomic_DNA"/>
</dbReference>
<dbReference type="EMBL" id="M61941">
    <property type="protein sequence ID" value="AAA59486.1"/>
    <property type="status" value="JOINED"/>
    <property type="molecule type" value="Genomic_DNA"/>
</dbReference>
<dbReference type="EMBL" id="M61942">
    <property type="protein sequence ID" value="AAA59486.1"/>
    <property type="status" value="JOINED"/>
    <property type="molecule type" value="Genomic_DNA"/>
</dbReference>
<dbReference type="EMBL" id="M61943">
    <property type="protein sequence ID" value="AAA59486.1"/>
    <property type="status" value="JOINED"/>
    <property type="molecule type" value="Genomic_DNA"/>
</dbReference>
<dbReference type="EMBL" id="M61944">
    <property type="protein sequence ID" value="AAA59486.1"/>
    <property type="status" value="JOINED"/>
    <property type="molecule type" value="Genomic_DNA"/>
</dbReference>
<dbReference type="EMBL" id="M61945">
    <property type="protein sequence ID" value="AAA59486.1"/>
    <property type="status" value="JOINED"/>
    <property type="molecule type" value="Genomic_DNA"/>
</dbReference>
<dbReference type="EMBL" id="M61946">
    <property type="protein sequence ID" value="AAA59486.1"/>
    <property type="status" value="JOINED"/>
    <property type="molecule type" value="Genomic_DNA"/>
</dbReference>
<dbReference type="EMBL" id="M61947">
    <property type="protein sequence ID" value="AAA59486.1"/>
    <property type="status" value="JOINED"/>
    <property type="molecule type" value="Genomic_DNA"/>
</dbReference>
<dbReference type="EMBL" id="M61948">
    <property type="protein sequence ID" value="AAA59486.1"/>
    <property type="status" value="JOINED"/>
    <property type="molecule type" value="Genomic_DNA"/>
</dbReference>
<dbReference type="EMBL" id="M61949">
    <property type="protein sequence ID" value="AAA59486.1"/>
    <property type="status" value="JOINED"/>
    <property type="molecule type" value="Genomic_DNA"/>
</dbReference>
<dbReference type="EMBL" id="M61950">
    <property type="protein sequence ID" value="AAA59486.1"/>
    <property type="status" value="JOINED"/>
    <property type="molecule type" value="Genomic_DNA"/>
</dbReference>
<dbReference type="EMBL" id="M55370">
    <property type="protein sequence ID" value="AAA59485.1"/>
    <property type="molecule type" value="Genomic_DNA"/>
</dbReference>
<dbReference type="EMBL" id="M55378">
    <property type="protein sequence ID" value="AAA59485.1"/>
    <property type="status" value="JOINED"/>
    <property type="molecule type" value="Genomic_DNA"/>
</dbReference>
<dbReference type="EMBL" id="M55365">
    <property type="protein sequence ID" value="AAA59485.1"/>
    <property type="status" value="JOINED"/>
    <property type="molecule type" value="Genomic_DNA"/>
</dbReference>
<dbReference type="EMBL" id="M55371">
    <property type="protein sequence ID" value="AAA59485.1"/>
    <property type="status" value="JOINED"/>
    <property type="molecule type" value="Genomic_DNA"/>
</dbReference>
<dbReference type="EMBL" id="M55372">
    <property type="protein sequence ID" value="AAA59485.1"/>
    <property type="status" value="JOINED"/>
    <property type="molecule type" value="Genomic_DNA"/>
</dbReference>
<dbReference type="EMBL" id="M55373">
    <property type="protein sequence ID" value="AAA59485.1"/>
    <property type="status" value="JOINED"/>
    <property type="molecule type" value="Genomic_DNA"/>
</dbReference>
<dbReference type="EMBL" id="M55374">
    <property type="protein sequence ID" value="AAA59485.1"/>
    <property type="status" value="JOINED"/>
    <property type="molecule type" value="Genomic_DNA"/>
</dbReference>
<dbReference type="EMBL" id="M55375">
    <property type="protein sequence ID" value="AAA59485.1"/>
    <property type="status" value="JOINED"/>
    <property type="molecule type" value="Genomic_DNA"/>
</dbReference>
<dbReference type="EMBL" id="M55376">
    <property type="protein sequence ID" value="AAA59485.1"/>
    <property type="status" value="JOINED"/>
    <property type="molecule type" value="Genomic_DNA"/>
</dbReference>
<dbReference type="EMBL" id="M55344">
    <property type="protein sequence ID" value="AAA59485.1"/>
    <property type="status" value="JOINED"/>
    <property type="molecule type" value="Genomic_DNA"/>
</dbReference>
<dbReference type="EMBL" id="M55345">
    <property type="protein sequence ID" value="AAA59485.1"/>
    <property type="status" value="JOINED"/>
    <property type="molecule type" value="Genomic_DNA"/>
</dbReference>
<dbReference type="EMBL" id="M55346">
    <property type="protein sequence ID" value="AAA59485.1"/>
    <property type="status" value="JOINED"/>
    <property type="molecule type" value="Genomic_DNA"/>
</dbReference>
<dbReference type="EMBL" id="M55347">
    <property type="protein sequence ID" value="AAA59485.1"/>
    <property type="status" value="JOINED"/>
    <property type="molecule type" value="Genomic_DNA"/>
</dbReference>
<dbReference type="EMBL" id="M55348">
    <property type="protein sequence ID" value="AAA59485.1"/>
    <property type="status" value="JOINED"/>
    <property type="molecule type" value="Genomic_DNA"/>
</dbReference>
<dbReference type="EMBL" id="M55349">
    <property type="protein sequence ID" value="AAA59485.1"/>
    <property type="status" value="JOINED"/>
    <property type="molecule type" value="Genomic_DNA"/>
</dbReference>
<dbReference type="EMBL" id="M55350">
    <property type="protein sequence ID" value="AAA59485.1"/>
    <property type="status" value="JOINED"/>
    <property type="molecule type" value="Genomic_DNA"/>
</dbReference>
<dbReference type="EMBL" id="M55351">
    <property type="protein sequence ID" value="AAA59485.1"/>
    <property type="status" value="JOINED"/>
    <property type="molecule type" value="Genomic_DNA"/>
</dbReference>
<dbReference type="EMBL" id="M55352">
    <property type="protein sequence ID" value="AAA59485.1"/>
    <property type="status" value="JOINED"/>
    <property type="molecule type" value="Genomic_DNA"/>
</dbReference>
<dbReference type="EMBL" id="M55353">
    <property type="protein sequence ID" value="AAA59485.1"/>
    <property type="status" value="JOINED"/>
    <property type="molecule type" value="Genomic_DNA"/>
</dbReference>
<dbReference type="EMBL" id="M55355">
    <property type="protein sequence ID" value="AAA59485.1"/>
    <property type="status" value="JOINED"/>
    <property type="molecule type" value="Genomic_DNA"/>
</dbReference>
<dbReference type="EMBL" id="M55356">
    <property type="protein sequence ID" value="AAA59485.1"/>
    <property type="status" value="JOINED"/>
    <property type="molecule type" value="Genomic_DNA"/>
</dbReference>
<dbReference type="EMBL" id="M55357">
    <property type="protein sequence ID" value="AAA59485.1"/>
    <property type="status" value="JOINED"/>
    <property type="molecule type" value="Genomic_DNA"/>
</dbReference>
<dbReference type="EMBL" id="M55358">
    <property type="protein sequence ID" value="AAA59485.1"/>
    <property type="status" value="JOINED"/>
    <property type="molecule type" value="Genomic_DNA"/>
</dbReference>
<dbReference type="EMBL" id="M55359">
    <property type="protein sequence ID" value="AAA59485.1"/>
    <property type="status" value="JOINED"/>
    <property type="molecule type" value="Genomic_DNA"/>
</dbReference>
<dbReference type="EMBL" id="M55360">
    <property type="protein sequence ID" value="AAA59485.1"/>
    <property type="status" value="JOINED"/>
    <property type="molecule type" value="Genomic_DNA"/>
</dbReference>
<dbReference type="EMBL" id="M55361">
    <property type="protein sequence ID" value="AAA59485.1"/>
    <property type="status" value="JOINED"/>
    <property type="molecule type" value="Genomic_DNA"/>
</dbReference>
<dbReference type="EMBL" id="M55362">
    <property type="protein sequence ID" value="AAA59485.1"/>
    <property type="status" value="JOINED"/>
    <property type="molecule type" value="Genomic_DNA"/>
</dbReference>
<dbReference type="EMBL" id="M55363">
    <property type="protein sequence ID" value="AAA59485.1"/>
    <property type="status" value="JOINED"/>
    <property type="molecule type" value="Genomic_DNA"/>
</dbReference>
<dbReference type="EMBL" id="M55364">
    <property type="protein sequence ID" value="AAA59485.1"/>
    <property type="status" value="JOINED"/>
    <property type="molecule type" value="Genomic_DNA"/>
</dbReference>
<dbReference type="EMBL" id="M55366">
    <property type="protein sequence ID" value="AAA59485.1"/>
    <property type="status" value="JOINED"/>
    <property type="molecule type" value="Genomic_DNA"/>
</dbReference>
<dbReference type="EMBL" id="M55367">
    <property type="protein sequence ID" value="AAA59485.1"/>
    <property type="status" value="JOINED"/>
    <property type="molecule type" value="Genomic_DNA"/>
</dbReference>
<dbReference type="EMBL" id="M55368">
    <property type="protein sequence ID" value="AAA59485.1"/>
    <property type="status" value="JOINED"/>
    <property type="molecule type" value="Genomic_DNA"/>
</dbReference>
<dbReference type="EMBL" id="M55369">
    <property type="protein sequence ID" value="AAA59485.1"/>
    <property type="status" value="JOINED"/>
    <property type="molecule type" value="Genomic_DNA"/>
</dbReference>
<dbReference type="EMBL" id="M61916">
    <property type="protein sequence ID" value="AAA59482.1"/>
    <property type="molecule type" value="mRNA"/>
</dbReference>
<dbReference type="EMBL" id="CH236947">
    <property type="protein sequence ID" value="EAL24388.1"/>
    <property type="molecule type" value="Genomic_DNA"/>
</dbReference>
<dbReference type="EMBL" id="BC113455">
    <property type="protein sequence ID" value="AAI13456.1"/>
    <property type="molecule type" value="mRNA"/>
</dbReference>
<dbReference type="EMBL" id="M20206">
    <property type="protein sequence ID" value="AAA59487.1"/>
    <property type="molecule type" value="mRNA"/>
</dbReference>
<dbReference type="CCDS" id="CCDS5750.1"/>
<dbReference type="PIR" id="S13547">
    <property type="entry name" value="MMHUB1"/>
</dbReference>
<dbReference type="RefSeq" id="NP_002282.2">
    <property type="nucleotide sequence ID" value="NM_002291.3"/>
</dbReference>
<dbReference type="PDB" id="5XAU">
    <property type="method" value="X-ray"/>
    <property type="resolution" value="1.80 A"/>
    <property type="chains" value="B/E=1714-1786"/>
</dbReference>
<dbReference type="PDB" id="7CEC">
    <property type="method" value="EM"/>
    <property type="resolution" value="3.90 A"/>
    <property type="chains" value="D=1714-1786"/>
</dbReference>
<dbReference type="PDB" id="8DMK">
    <property type="method" value="EM"/>
    <property type="resolution" value="3.70 A"/>
    <property type="chains" value="B=29-335"/>
</dbReference>
<dbReference type="PDBsum" id="5XAU"/>
<dbReference type="PDBsum" id="7CEC"/>
<dbReference type="PDBsum" id="8DMK"/>
<dbReference type="EMDB" id="EMD-27542"/>
<dbReference type="EMDB" id="EMD-30342"/>
<dbReference type="SMR" id="P07942"/>
<dbReference type="BioGRID" id="110106">
    <property type="interactions" value="159"/>
</dbReference>
<dbReference type="ComplexPortal" id="CPX-1770">
    <property type="entry name" value="Laminin-111 complex"/>
</dbReference>
<dbReference type="ComplexPortal" id="CPX-1771">
    <property type="entry name" value="Laminin-211 complex"/>
</dbReference>
<dbReference type="ComplexPortal" id="CPX-1775">
    <property type="entry name" value="Laminin-311 complex variant A"/>
</dbReference>
<dbReference type="ComplexPortal" id="CPX-1777">
    <property type="entry name" value="Laminin-411 complex"/>
</dbReference>
<dbReference type="ComplexPortal" id="CPX-1779">
    <property type="entry name" value="Laminin-511 complex"/>
</dbReference>
<dbReference type="ComplexPortal" id="CPX-1781">
    <property type="entry name" value="Laminin-213 complex"/>
</dbReference>
<dbReference type="ComplexPortal" id="CPX-3166">
    <property type="entry name" value="Laminin-311 complex variant B"/>
</dbReference>
<dbReference type="CORUM" id="P07942"/>
<dbReference type="FunCoup" id="P07942">
    <property type="interactions" value="1021"/>
</dbReference>
<dbReference type="IntAct" id="P07942">
    <property type="interactions" value="99"/>
</dbReference>
<dbReference type="MINT" id="P07942"/>
<dbReference type="STRING" id="9606.ENSP00000222399"/>
<dbReference type="ChEMBL" id="CHEMBL2364187"/>
<dbReference type="DrugBank" id="DB06245">
    <property type="generic name" value="Lanoteplase"/>
</dbReference>
<dbReference type="GlyConnect" id="1442">
    <property type="glycosylation" value="33 N-Linked glycans (6 sites)"/>
</dbReference>
<dbReference type="GlyCosmos" id="P07942">
    <property type="glycosylation" value="13 sites, 34 glycans"/>
</dbReference>
<dbReference type="GlyGen" id="P07942">
    <property type="glycosylation" value="17 sites, 133 N-linked glycans (9 sites), 2 O-linked glycans (4 sites)"/>
</dbReference>
<dbReference type="iPTMnet" id="P07942"/>
<dbReference type="MetOSite" id="P07942"/>
<dbReference type="PhosphoSitePlus" id="P07942"/>
<dbReference type="SwissPalm" id="P07942"/>
<dbReference type="BioMuta" id="LAMB1"/>
<dbReference type="DMDM" id="317373377"/>
<dbReference type="jPOST" id="P07942"/>
<dbReference type="MassIVE" id="P07942"/>
<dbReference type="PaxDb" id="9606-ENSP00000222399"/>
<dbReference type="PeptideAtlas" id="P07942"/>
<dbReference type="ProteomicsDB" id="52043"/>
<dbReference type="Pumba" id="P07942"/>
<dbReference type="Antibodypedia" id="1361">
    <property type="antibodies" value="430 antibodies from 41 providers"/>
</dbReference>
<dbReference type="DNASU" id="3912"/>
<dbReference type="Ensembl" id="ENST00000222399.11">
    <property type="protein sequence ID" value="ENSP00000222399.6"/>
    <property type="gene ID" value="ENSG00000091136.15"/>
</dbReference>
<dbReference type="GeneID" id="3912"/>
<dbReference type="KEGG" id="hsa:3912"/>
<dbReference type="MANE-Select" id="ENST00000222399.11">
    <property type="protein sequence ID" value="ENSP00000222399.6"/>
    <property type="RefSeq nucleotide sequence ID" value="NM_002291.3"/>
    <property type="RefSeq protein sequence ID" value="NP_002282.2"/>
</dbReference>
<dbReference type="UCSC" id="uc003vew.3">
    <property type="organism name" value="human"/>
</dbReference>
<dbReference type="AGR" id="HGNC:6486"/>
<dbReference type="CTD" id="3912"/>
<dbReference type="DisGeNET" id="3912"/>
<dbReference type="GeneCards" id="LAMB1"/>
<dbReference type="HGNC" id="HGNC:6486">
    <property type="gene designation" value="LAMB1"/>
</dbReference>
<dbReference type="HPA" id="ENSG00000091136">
    <property type="expression patterns" value="Low tissue specificity"/>
</dbReference>
<dbReference type="MalaCards" id="LAMB1"/>
<dbReference type="MIM" id="150240">
    <property type="type" value="gene"/>
</dbReference>
<dbReference type="MIM" id="615191">
    <property type="type" value="phenotype"/>
</dbReference>
<dbReference type="neXtProt" id="NX_P07942"/>
<dbReference type="OpenTargets" id="ENSG00000091136"/>
<dbReference type="Orphanet" id="352682">
    <property type="disease" value="Cobblestone lissencephaly without muscular or ocular involvement"/>
</dbReference>
<dbReference type="PharmGKB" id="PA30275"/>
<dbReference type="VEuPathDB" id="HostDB:ENSG00000091136"/>
<dbReference type="eggNOG" id="KOG0994">
    <property type="taxonomic scope" value="Eukaryota"/>
</dbReference>
<dbReference type="GeneTree" id="ENSGT00940000156003"/>
<dbReference type="HOGENOM" id="CLU_001560_1_0_1"/>
<dbReference type="InParanoid" id="P07942"/>
<dbReference type="OMA" id="DYQCDRE"/>
<dbReference type="OrthoDB" id="5985440at2759"/>
<dbReference type="PAN-GO" id="P07942">
    <property type="GO annotations" value="8 GO annotations based on evolutionary models"/>
</dbReference>
<dbReference type="PhylomeDB" id="P07942"/>
<dbReference type="TreeFam" id="TF312903"/>
<dbReference type="PathwayCommons" id="P07942"/>
<dbReference type="Reactome" id="R-HSA-1474228">
    <property type="pathway name" value="Degradation of the extracellular matrix"/>
</dbReference>
<dbReference type="Reactome" id="R-HSA-3000157">
    <property type="pathway name" value="Laminin interactions"/>
</dbReference>
<dbReference type="Reactome" id="R-HSA-3000171">
    <property type="pathway name" value="Non-integrin membrane-ECM interactions"/>
</dbReference>
<dbReference type="Reactome" id="R-HSA-3000178">
    <property type="pathway name" value="ECM proteoglycans"/>
</dbReference>
<dbReference type="Reactome" id="R-HSA-373760">
    <property type="pathway name" value="L1CAM interactions"/>
</dbReference>
<dbReference type="Reactome" id="R-HSA-381426">
    <property type="pathway name" value="Regulation of Insulin-like Growth Factor (IGF) transport and uptake by Insulin-like Growth Factor Binding Proteins (IGFBPs)"/>
</dbReference>
<dbReference type="Reactome" id="R-HSA-8874081">
    <property type="pathway name" value="MET activates PTK2 signaling"/>
</dbReference>
<dbReference type="Reactome" id="R-HSA-8957275">
    <property type="pathway name" value="Post-translational protein phosphorylation"/>
</dbReference>
<dbReference type="Reactome" id="R-HSA-9619665">
    <property type="pathway name" value="EGR2 and SOX10-mediated initiation of Schwann cell myelination"/>
</dbReference>
<dbReference type="Reactome" id="R-HSA-9913351">
    <property type="pathway name" value="Formation of the dystrophin-glycoprotein complex (DGC)"/>
</dbReference>
<dbReference type="SignaLink" id="P07942"/>
<dbReference type="SIGNOR" id="P07942"/>
<dbReference type="BioGRID-ORCS" id="3912">
    <property type="hits" value="14 hits in 1161 CRISPR screens"/>
</dbReference>
<dbReference type="ChiTaRS" id="LAMB1">
    <property type="organism name" value="human"/>
</dbReference>
<dbReference type="GeneWiki" id="Laminin,_beta_1"/>
<dbReference type="GenomeRNAi" id="3912"/>
<dbReference type="Pharos" id="P07942">
    <property type="development level" value="Tbio"/>
</dbReference>
<dbReference type="PRO" id="PR:P07942"/>
<dbReference type="Proteomes" id="UP000005640">
    <property type="component" value="Chromosome 7"/>
</dbReference>
<dbReference type="RNAct" id="P07942">
    <property type="molecule type" value="protein"/>
</dbReference>
<dbReference type="Bgee" id="ENSG00000091136">
    <property type="expression patterns" value="Expressed in tibial nerve and 198 other cell types or tissues"/>
</dbReference>
<dbReference type="ExpressionAtlas" id="P07942">
    <property type="expression patterns" value="baseline and differential"/>
</dbReference>
<dbReference type="GO" id="GO:0005604">
    <property type="term" value="C:basement membrane"/>
    <property type="evidence" value="ECO:0000314"/>
    <property type="project" value="UniProtKB"/>
</dbReference>
<dbReference type="GO" id="GO:0062023">
    <property type="term" value="C:collagen-containing extracellular matrix"/>
    <property type="evidence" value="ECO:0007005"/>
    <property type="project" value="UniProtKB"/>
</dbReference>
<dbReference type="GO" id="GO:0005788">
    <property type="term" value="C:endoplasmic reticulum lumen"/>
    <property type="evidence" value="ECO:0000304"/>
    <property type="project" value="Reactome"/>
</dbReference>
<dbReference type="GO" id="GO:0070062">
    <property type="term" value="C:extracellular exosome"/>
    <property type="evidence" value="ECO:0007005"/>
    <property type="project" value="UniProtKB"/>
</dbReference>
<dbReference type="GO" id="GO:0005576">
    <property type="term" value="C:extracellular region"/>
    <property type="evidence" value="ECO:0000304"/>
    <property type="project" value="Reactome"/>
</dbReference>
<dbReference type="GO" id="GO:0005615">
    <property type="term" value="C:extracellular space"/>
    <property type="evidence" value="ECO:0000314"/>
    <property type="project" value="UniProtKB"/>
</dbReference>
<dbReference type="GO" id="GO:0005606">
    <property type="term" value="C:laminin-1 complex"/>
    <property type="evidence" value="ECO:0000314"/>
    <property type="project" value="UniProtKB"/>
</dbReference>
<dbReference type="GO" id="GO:0043259">
    <property type="term" value="C:laminin-10 complex"/>
    <property type="evidence" value="ECO:0000314"/>
    <property type="project" value="UniProtKB"/>
</dbReference>
<dbReference type="GO" id="GO:0005607">
    <property type="term" value="C:laminin-2 complex"/>
    <property type="evidence" value="ECO:0000314"/>
    <property type="project" value="UniProtKB"/>
</dbReference>
<dbReference type="GO" id="GO:0043257">
    <property type="term" value="C:laminin-8 complex"/>
    <property type="evidence" value="ECO:0000314"/>
    <property type="project" value="UniProtKB"/>
</dbReference>
<dbReference type="GO" id="GO:0005634">
    <property type="term" value="C:nucleus"/>
    <property type="evidence" value="ECO:0007669"/>
    <property type="project" value="Ensembl"/>
</dbReference>
<dbReference type="GO" id="GO:0048471">
    <property type="term" value="C:perinuclear region of cytoplasm"/>
    <property type="evidence" value="ECO:0000250"/>
    <property type="project" value="UniProtKB"/>
</dbReference>
<dbReference type="GO" id="GO:0098637">
    <property type="term" value="C:protein complex involved in cell-matrix adhesion"/>
    <property type="evidence" value="ECO:0000303"/>
    <property type="project" value="ComplexPortal"/>
</dbReference>
<dbReference type="GO" id="GO:0019899">
    <property type="term" value="F:enzyme binding"/>
    <property type="evidence" value="ECO:0007669"/>
    <property type="project" value="Ensembl"/>
</dbReference>
<dbReference type="GO" id="GO:0005201">
    <property type="term" value="F:extracellular matrix structural constituent"/>
    <property type="evidence" value="ECO:0000314"/>
    <property type="project" value="HGNC-UCL"/>
</dbReference>
<dbReference type="GO" id="GO:0043208">
    <property type="term" value="F:glycosphingolipid binding"/>
    <property type="evidence" value="ECO:0007669"/>
    <property type="project" value="Ensembl"/>
</dbReference>
<dbReference type="GO" id="GO:0005178">
    <property type="term" value="F:integrin binding"/>
    <property type="evidence" value="ECO:0007669"/>
    <property type="project" value="Ensembl"/>
</dbReference>
<dbReference type="GO" id="GO:0005198">
    <property type="term" value="F:structural molecule activity"/>
    <property type="evidence" value="ECO:0000303"/>
    <property type="project" value="UniProtKB"/>
</dbReference>
<dbReference type="GO" id="GO:0007155">
    <property type="term" value="P:cell adhesion"/>
    <property type="evidence" value="ECO:0000304"/>
    <property type="project" value="HGNC-UCL"/>
</dbReference>
<dbReference type="GO" id="GO:0007566">
    <property type="term" value="P:embryo implantation"/>
    <property type="evidence" value="ECO:0007669"/>
    <property type="project" value="Ensembl"/>
</dbReference>
<dbReference type="GO" id="GO:0035987">
    <property type="term" value="P:endodermal cell differentiation"/>
    <property type="evidence" value="ECO:0000270"/>
    <property type="project" value="UniProtKB"/>
</dbReference>
<dbReference type="GO" id="GO:0007162">
    <property type="term" value="P:negative regulation of cell adhesion"/>
    <property type="evidence" value="ECO:0007669"/>
    <property type="project" value="Ensembl"/>
</dbReference>
<dbReference type="GO" id="GO:0031175">
    <property type="term" value="P:neuron projection development"/>
    <property type="evidence" value="ECO:0000314"/>
    <property type="project" value="UniProtKB"/>
</dbReference>
<dbReference type="GO" id="GO:0021812">
    <property type="term" value="P:neuronal-glial interaction involved in cerebral cortex radial glia guided migration"/>
    <property type="evidence" value="ECO:0000315"/>
    <property type="project" value="UniProtKB"/>
</dbReference>
<dbReference type="GO" id="GO:0042476">
    <property type="term" value="P:odontogenesis"/>
    <property type="evidence" value="ECO:0000314"/>
    <property type="project" value="UniProtKB"/>
</dbReference>
<dbReference type="GO" id="GO:0045785">
    <property type="term" value="P:positive regulation of cell adhesion"/>
    <property type="evidence" value="ECO:0000303"/>
    <property type="project" value="ComplexPortal"/>
</dbReference>
<dbReference type="GO" id="GO:0030335">
    <property type="term" value="P:positive regulation of cell migration"/>
    <property type="evidence" value="ECO:0000314"/>
    <property type="project" value="UniProtKB"/>
</dbReference>
<dbReference type="GO" id="GO:0050679">
    <property type="term" value="P:positive regulation of epithelial cell proliferation"/>
    <property type="evidence" value="ECO:0000304"/>
    <property type="project" value="HGNC-UCL"/>
</dbReference>
<dbReference type="GO" id="GO:2001046">
    <property type="term" value="P:positive regulation of integrin-mediated signaling pathway"/>
    <property type="evidence" value="ECO:0000303"/>
    <property type="project" value="ComplexPortal"/>
</dbReference>
<dbReference type="GO" id="GO:0051149">
    <property type="term" value="P:positive regulation of muscle cell differentiation"/>
    <property type="evidence" value="ECO:0000303"/>
    <property type="project" value="ComplexPortal"/>
</dbReference>
<dbReference type="GO" id="GO:0110011">
    <property type="term" value="P:regulation of basement membrane organization"/>
    <property type="evidence" value="ECO:0000303"/>
    <property type="project" value="ComplexPortal"/>
</dbReference>
<dbReference type="GO" id="GO:0034446">
    <property type="term" value="P:substrate adhesion-dependent cell spreading"/>
    <property type="evidence" value="ECO:0000314"/>
    <property type="project" value="BHF-UCL"/>
</dbReference>
<dbReference type="CDD" id="cd22300">
    <property type="entry name" value="cc_LAMB1_C"/>
    <property type="match status" value="1"/>
</dbReference>
<dbReference type="CDD" id="cd00055">
    <property type="entry name" value="EGF_Lam"/>
    <property type="match status" value="13"/>
</dbReference>
<dbReference type="FunFam" id="2.10.25.10:FF:000011">
    <property type="entry name" value="Cadherin EGF LAG seven-pass G-type receptor"/>
    <property type="match status" value="1"/>
</dbReference>
<dbReference type="FunFam" id="2.10.25.10:FF:000083">
    <property type="entry name" value="Laminin subunit alpha"/>
    <property type="match status" value="1"/>
</dbReference>
<dbReference type="FunFam" id="2.10.25.10:FF:000084">
    <property type="entry name" value="Laminin subunit alpha 3"/>
    <property type="match status" value="1"/>
</dbReference>
<dbReference type="FunFam" id="2.10.25.10:FF:000065">
    <property type="entry name" value="Laminin subunit beta 1"/>
    <property type="match status" value="1"/>
</dbReference>
<dbReference type="FunFam" id="2.10.25.10:FF:000101">
    <property type="entry name" value="Laminin subunit beta 1"/>
    <property type="match status" value="1"/>
</dbReference>
<dbReference type="FunFam" id="2.10.25.10:FF:000130">
    <property type="entry name" value="Laminin subunit beta 1"/>
    <property type="match status" value="1"/>
</dbReference>
<dbReference type="FunFam" id="2.10.25.10:FF:000138">
    <property type="entry name" value="Laminin subunit beta 1"/>
    <property type="match status" value="1"/>
</dbReference>
<dbReference type="FunFam" id="2.10.25.10:FF:000145">
    <property type="entry name" value="Laminin subunit beta 1"/>
    <property type="match status" value="1"/>
</dbReference>
<dbReference type="FunFam" id="2.170.300.10:FF:000004">
    <property type="entry name" value="Laminin subunit beta 1"/>
    <property type="match status" value="1"/>
</dbReference>
<dbReference type="FunFam" id="2.60.120.260:FF:000010">
    <property type="entry name" value="Laminin subunit beta 1"/>
    <property type="match status" value="1"/>
</dbReference>
<dbReference type="FunFam" id="2.10.25.10:FF:000135">
    <property type="entry name" value="Laminin subunit beta 4"/>
    <property type="match status" value="2"/>
</dbReference>
<dbReference type="FunFam" id="2.10.25.10:FF:000280">
    <property type="entry name" value="Laminin subunit beta 4"/>
    <property type="match status" value="1"/>
</dbReference>
<dbReference type="FunFam" id="2.170.300.10:FF:000001">
    <property type="entry name" value="Laminin subunit beta-1"/>
    <property type="match status" value="1"/>
</dbReference>
<dbReference type="Gene3D" id="2.60.120.260">
    <property type="entry name" value="Galactose-binding domain-like"/>
    <property type="match status" value="1"/>
</dbReference>
<dbReference type="Gene3D" id="2.10.25.10">
    <property type="entry name" value="Laminin"/>
    <property type="match status" value="9"/>
</dbReference>
<dbReference type="Gene3D" id="2.170.300.10">
    <property type="entry name" value="Tie2 ligand-binding domain superfamily"/>
    <property type="match status" value="2"/>
</dbReference>
<dbReference type="InterPro" id="IPR000742">
    <property type="entry name" value="EGF-like_dom"/>
</dbReference>
<dbReference type="InterPro" id="IPR056558">
    <property type="entry name" value="LAMB1-4_helical"/>
</dbReference>
<dbReference type="InterPro" id="IPR050440">
    <property type="entry name" value="Laminin/Netrin_ECM"/>
</dbReference>
<dbReference type="InterPro" id="IPR013015">
    <property type="entry name" value="Laminin_IV_B"/>
</dbReference>
<dbReference type="InterPro" id="IPR008211">
    <property type="entry name" value="Laminin_N"/>
</dbReference>
<dbReference type="InterPro" id="IPR002049">
    <property type="entry name" value="LE_dom"/>
</dbReference>
<dbReference type="InterPro" id="IPR056863">
    <property type="entry name" value="LMN_ATRN_NET-like_EGF"/>
</dbReference>
<dbReference type="PANTHER" id="PTHR10574:SF233">
    <property type="entry name" value="LAMININ SUBUNIT BETA-1"/>
    <property type="match status" value="1"/>
</dbReference>
<dbReference type="PANTHER" id="PTHR10574">
    <property type="entry name" value="NETRIN/LAMININ-RELATED"/>
    <property type="match status" value="1"/>
</dbReference>
<dbReference type="Pfam" id="PF00053">
    <property type="entry name" value="EGF_laminin"/>
    <property type="match status" value="11"/>
</dbReference>
<dbReference type="Pfam" id="PF24973">
    <property type="entry name" value="EGF_LMN_ATRN"/>
    <property type="match status" value="2"/>
</dbReference>
<dbReference type="Pfam" id="PF23219">
    <property type="entry name" value="LAMB1"/>
    <property type="match status" value="1"/>
</dbReference>
<dbReference type="Pfam" id="PF21199">
    <property type="entry name" value="LAMININ_IV_B"/>
    <property type="match status" value="1"/>
</dbReference>
<dbReference type="Pfam" id="PF00055">
    <property type="entry name" value="Laminin_N"/>
    <property type="match status" value="1"/>
</dbReference>
<dbReference type="PRINTS" id="PR00011">
    <property type="entry name" value="EGFLAMININ"/>
</dbReference>
<dbReference type="SMART" id="SM00181">
    <property type="entry name" value="EGF"/>
    <property type="match status" value="8"/>
</dbReference>
<dbReference type="SMART" id="SM00180">
    <property type="entry name" value="EGF_Lam"/>
    <property type="match status" value="13"/>
</dbReference>
<dbReference type="SMART" id="SM00136">
    <property type="entry name" value="LamNT"/>
    <property type="match status" value="1"/>
</dbReference>
<dbReference type="SUPFAM" id="SSF57196">
    <property type="entry name" value="EGF/Laminin"/>
    <property type="match status" value="13"/>
</dbReference>
<dbReference type="SUPFAM" id="SSF46579">
    <property type="entry name" value="Prefoldin"/>
    <property type="match status" value="1"/>
</dbReference>
<dbReference type="PROSITE" id="PS00022">
    <property type="entry name" value="EGF_1"/>
    <property type="match status" value="9"/>
</dbReference>
<dbReference type="PROSITE" id="PS01186">
    <property type="entry name" value="EGF_2"/>
    <property type="match status" value="2"/>
</dbReference>
<dbReference type="PROSITE" id="PS01248">
    <property type="entry name" value="EGF_LAM_1"/>
    <property type="match status" value="11"/>
</dbReference>
<dbReference type="PROSITE" id="PS50027">
    <property type="entry name" value="EGF_LAM_2"/>
    <property type="match status" value="13"/>
</dbReference>
<dbReference type="PROSITE" id="PS51116">
    <property type="entry name" value="LAMININ_IVB"/>
    <property type="match status" value="1"/>
</dbReference>
<dbReference type="PROSITE" id="PS51117">
    <property type="entry name" value="LAMININ_NTER"/>
    <property type="match status" value="1"/>
</dbReference>
<keyword id="KW-0002">3D-structure</keyword>
<keyword id="KW-0084">Basement membrane</keyword>
<keyword id="KW-0130">Cell adhesion</keyword>
<keyword id="KW-0175">Coiled coil</keyword>
<keyword id="KW-1015">Disulfide bond</keyword>
<keyword id="KW-0272">Extracellular matrix</keyword>
<keyword id="KW-0325">Glycoprotein</keyword>
<keyword id="KW-0424">Laminin EGF-like domain</keyword>
<keyword id="KW-0451">Lissencephaly</keyword>
<keyword id="KW-0597">Phosphoprotein</keyword>
<keyword id="KW-1267">Proteomics identification</keyword>
<keyword id="KW-1185">Reference proteome</keyword>
<keyword id="KW-0677">Repeat</keyword>
<keyword id="KW-0964">Secreted</keyword>
<keyword id="KW-0732">Signal</keyword>
<gene>
    <name type="primary">LAMB1</name>
</gene>
<proteinExistence type="evidence at protein level"/>
<feature type="signal peptide">
    <location>
        <begin position="1"/>
        <end position="21"/>
    </location>
</feature>
<feature type="chain" id="PRO_0000017065" description="Laminin subunit beta-1">
    <location>
        <begin position="22"/>
        <end position="1786"/>
    </location>
</feature>
<feature type="domain" description="Laminin N-terminal" evidence="6">
    <location>
        <begin position="31"/>
        <end position="270"/>
    </location>
</feature>
<feature type="domain" description="Laminin EGF-like 1" evidence="4">
    <location>
        <begin position="271"/>
        <end position="334"/>
    </location>
</feature>
<feature type="domain" description="Laminin EGF-like 2" evidence="4">
    <location>
        <begin position="335"/>
        <end position="397"/>
    </location>
</feature>
<feature type="domain" description="Laminin EGF-like 3" evidence="4">
    <location>
        <begin position="398"/>
        <end position="457"/>
    </location>
</feature>
<feature type="domain" description="Laminin EGF-like 4" evidence="4">
    <location>
        <begin position="458"/>
        <end position="509"/>
    </location>
</feature>
<feature type="domain" description="Laminin EGF-like 5; truncated" evidence="4">
    <location>
        <begin position="510"/>
        <end position="540"/>
    </location>
</feature>
<feature type="domain" description="Laminin IV type B" evidence="5">
    <location>
        <begin position="549"/>
        <end position="767"/>
    </location>
</feature>
<feature type="domain" description="Laminin EGF-like 6" evidence="4">
    <location>
        <begin position="773"/>
        <end position="820"/>
    </location>
</feature>
<feature type="domain" description="Laminin EGF-like 7" evidence="4">
    <location>
        <begin position="821"/>
        <end position="866"/>
    </location>
</feature>
<feature type="domain" description="Laminin EGF-like 8" evidence="4">
    <location>
        <begin position="867"/>
        <end position="916"/>
    </location>
</feature>
<feature type="domain" description="Laminin EGF-like 9" evidence="4">
    <location>
        <begin position="917"/>
        <end position="975"/>
    </location>
</feature>
<feature type="domain" description="Laminin EGF-like 10" evidence="4">
    <location>
        <begin position="976"/>
        <end position="1027"/>
    </location>
</feature>
<feature type="domain" description="Laminin EGF-like 11" evidence="4">
    <location>
        <begin position="1028"/>
        <end position="1083"/>
    </location>
</feature>
<feature type="domain" description="Laminin EGF-like 12" evidence="4">
    <location>
        <begin position="1084"/>
        <end position="1131"/>
    </location>
</feature>
<feature type="domain" description="Laminin EGF-like 13" evidence="4">
    <location>
        <begin position="1132"/>
        <end position="1178"/>
    </location>
</feature>
<feature type="region of interest" description="Domain II">
    <location>
        <begin position="1179"/>
        <end position="1397"/>
    </location>
</feature>
<feature type="region of interest" description="Domain alpha">
    <location>
        <begin position="1398"/>
        <end position="1430"/>
    </location>
</feature>
<feature type="region of interest" description="Domain I">
    <location>
        <begin position="1431"/>
        <end position="1786"/>
    </location>
</feature>
<feature type="coiled-coil region" evidence="3">
    <location>
        <begin position="1216"/>
        <end position="1315"/>
    </location>
</feature>
<feature type="coiled-coil region" evidence="3">
    <location>
        <begin position="1353"/>
        <end position="1388"/>
    </location>
</feature>
<feature type="coiled-coil region" evidence="3">
    <location>
        <begin position="1442"/>
        <end position="1781"/>
    </location>
</feature>
<feature type="modified residue" description="Phosphoserine" evidence="1">
    <location>
        <position position="250"/>
    </location>
</feature>
<feature type="modified residue" description="Phosphoserine; by FAM20C" evidence="11">
    <location>
        <position position="1478"/>
    </location>
</feature>
<feature type="modified residue" description="Phosphoserine; by FAM20C" evidence="11">
    <location>
        <position position="1496"/>
    </location>
</feature>
<feature type="modified residue" description="Phosphoserine; by FAM20C" evidence="11">
    <location>
        <position position="1666"/>
    </location>
</feature>
<feature type="modified residue" description="Phosphoserine; by FAM20C" evidence="11">
    <location>
        <position position="1682"/>
    </location>
</feature>
<feature type="glycosylation site" description="N-linked (GlcNAc...) asparagine" evidence="3">
    <location>
        <position position="120"/>
    </location>
</feature>
<feature type="glycosylation site" description="N-linked (GlcNAc...) asparagine" evidence="3">
    <location>
        <position position="356"/>
    </location>
</feature>
<feature type="glycosylation site" description="N-linked (GlcNAc...) asparagine" evidence="3">
    <location>
        <position position="519"/>
    </location>
</feature>
<feature type="glycosylation site" description="N-linked (GlcNAc...) asparagine" evidence="3">
    <location>
        <position position="677"/>
    </location>
</feature>
<feature type="glycosylation site" description="N-linked (GlcNAc...) asparagine" evidence="3">
    <location>
        <position position="1041"/>
    </location>
</feature>
<feature type="glycosylation site" description="N-linked (GlcNAc...) asparagine" evidence="3">
    <location>
        <position position="1195"/>
    </location>
</feature>
<feature type="glycosylation site" description="N-linked (GlcNAc...) asparagine" evidence="7 8">
    <location>
        <position position="1279"/>
    </location>
</feature>
<feature type="glycosylation site" description="N-linked (GlcNAc...) asparagine" evidence="3">
    <location>
        <position position="1336"/>
    </location>
</feature>
<feature type="glycosylation site" description="N-linked (GlcNAc...) asparagine" evidence="3">
    <location>
        <position position="1343"/>
    </location>
</feature>
<feature type="glycosylation site" description="N-linked (GlcNAc...) asparagine" evidence="3">
    <location>
        <position position="1487"/>
    </location>
</feature>
<feature type="glycosylation site" description="N-linked (GlcNAc...) asparagine" evidence="3">
    <location>
        <position position="1542"/>
    </location>
</feature>
<feature type="disulfide bond" evidence="4">
    <location>
        <begin position="271"/>
        <end position="280"/>
    </location>
</feature>
<feature type="disulfide bond" evidence="4">
    <location>
        <begin position="273"/>
        <end position="298"/>
    </location>
</feature>
<feature type="disulfide bond" evidence="4">
    <location>
        <begin position="300"/>
        <end position="309"/>
    </location>
</feature>
<feature type="disulfide bond" evidence="4">
    <location>
        <begin position="312"/>
        <end position="332"/>
    </location>
</feature>
<feature type="disulfide bond" evidence="4">
    <location>
        <begin position="335"/>
        <end position="344"/>
    </location>
</feature>
<feature type="disulfide bond" evidence="4">
    <location>
        <begin position="337"/>
        <end position="362"/>
    </location>
</feature>
<feature type="disulfide bond" evidence="4">
    <location>
        <begin position="365"/>
        <end position="374"/>
    </location>
</feature>
<feature type="disulfide bond" evidence="4">
    <location>
        <begin position="377"/>
        <end position="395"/>
    </location>
</feature>
<feature type="disulfide bond" evidence="4">
    <location>
        <begin position="398"/>
        <end position="411"/>
    </location>
</feature>
<feature type="disulfide bond" evidence="4">
    <location>
        <begin position="400"/>
        <end position="426"/>
    </location>
</feature>
<feature type="disulfide bond" evidence="4">
    <location>
        <begin position="428"/>
        <end position="437"/>
    </location>
</feature>
<feature type="disulfide bond" evidence="4">
    <location>
        <begin position="440"/>
        <end position="455"/>
    </location>
</feature>
<feature type="disulfide bond" evidence="4">
    <location>
        <begin position="458"/>
        <end position="472"/>
    </location>
</feature>
<feature type="disulfide bond" evidence="4">
    <location>
        <begin position="460"/>
        <end position="479"/>
    </location>
</feature>
<feature type="disulfide bond" evidence="4">
    <location>
        <begin position="481"/>
        <end position="490"/>
    </location>
</feature>
<feature type="disulfide bond" evidence="4">
    <location>
        <begin position="493"/>
        <end position="507"/>
    </location>
</feature>
<feature type="disulfide bond" evidence="4">
    <location>
        <begin position="510"/>
        <end position="522"/>
    </location>
</feature>
<feature type="disulfide bond" evidence="4">
    <location>
        <begin position="512"/>
        <end position="529"/>
    </location>
</feature>
<feature type="disulfide bond" evidence="4">
    <location>
        <begin position="531"/>
        <end position="540"/>
    </location>
</feature>
<feature type="disulfide bond" evidence="4">
    <location>
        <begin position="773"/>
        <end position="785"/>
    </location>
</feature>
<feature type="disulfide bond" evidence="4">
    <location>
        <begin position="775"/>
        <end position="792"/>
    </location>
</feature>
<feature type="disulfide bond" evidence="4">
    <location>
        <begin position="794"/>
        <end position="803"/>
    </location>
</feature>
<feature type="disulfide bond" evidence="4">
    <location>
        <begin position="806"/>
        <end position="818"/>
    </location>
</feature>
<feature type="disulfide bond" evidence="4">
    <location>
        <begin position="821"/>
        <end position="833"/>
    </location>
</feature>
<feature type="disulfide bond" evidence="4">
    <location>
        <begin position="823"/>
        <end position="840"/>
    </location>
</feature>
<feature type="disulfide bond" evidence="4">
    <location>
        <begin position="842"/>
        <end position="851"/>
    </location>
</feature>
<feature type="disulfide bond" evidence="4">
    <location>
        <begin position="854"/>
        <end position="864"/>
    </location>
</feature>
<feature type="disulfide bond" evidence="4">
    <location>
        <begin position="867"/>
        <end position="876"/>
    </location>
</feature>
<feature type="disulfide bond" evidence="4">
    <location>
        <begin position="869"/>
        <end position="883"/>
    </location>
</feature>
<feature type="disulfide bond" evidence="4">
    <location>
        <begin position="886"/>
        <end position="895"/>
    </location>
</feature>
<feature type="disulfide bond" evidence="4">
    <location>
        <begin position="898"/>
        <end position="914"/>
    </location>
</feature>
<feature type="disulfide bond" evidence="4">
    <location>
        <begin position="917"/>
        <end position="933"/>
    </location>
</feature>
<feature type="disulfide bond" evidence="4">
    <location>
        <begin position="919"/>
        <end position="944"/>
    </location>
</feature>
<feature type="disulfide bond" evidence="4">
    <location>
        <begin position="946"/>
        <end position="955"/>
    </location>
</feature>
<feature type="disulfide bond" evidence="4">
    <location>
        <begin position="958"/>
        <end position="973"/>
    </location>
</feature>
<feature type="disulfide bond" evidence="4">
    <location>
        <begin position="976"/>
        <end position="990"/>
    </location>
</feature>
<feature type="disulfide bond" evidence="4">
    <location>
        <begin position="978"/>
        <end position="997"/>
    </location>
</feature>
<feature type="disulfide bond" evidence="4">
    <location>
        <begin position="1000"/>
        <end position="1009"/>
    </location>
</feature>
<feature type="disulfide bond" evidence="4">
    <location>
        <begin position="1012"/>
        <end position="1025"/>
    </location>
</feature>
<feature type="disulfide bond" evidence="4">
    <location>
        <begin position="1028"/>
        <end position="1040"/>
    </location>
</feature>
<feature type="disulfide bond" evidence="4">
    <location>
        <begin position="1030"/>
        <end position="1054"/>
    </location>
</feature>
<feature type="disulfide bond" evidence="4">
    <location>
        <begin position="1056"/>
        <end position="1065"/>
    </location>
</feature>
<feature type="disulfide bond" evidence="4">
    <location>
        <begin position="1068"/>
        <end position="1081"/>
    </location>
</feature>
<feature type="disulfide bond" evidence="4">
    <location>
        <begin position="1084"/>
        <end position="1096"/>
    </location>
</feature>
<feature type="disulfide bond" evidence="4">
    <location>
        <begin position="1086"/>
        <end position="1103"/>
    </location>
</feature>
<feature type="disulfide bond" evidence="4">
    <location>
        <begin position="1105"/>
        <end position="1114"/>
    </location>
</feature>
<feature type="disulfide bond" evidence="4">
    <location>
        <begin position="1117"/>
        <end position="1129"/>
    </location>
</feature>
<feature type="disulfide bond" evidence="4">
    <location>
        <begin position="1132"/>
        <end position="1144"/>
    </location>
</feature>
<feature type="disulfide bond" evidence="4">
    <location>
        <begin position="1134"/>
        <end position="1151"/>
    </location>
</feature>
<feature type="disulfide bond" evidence="4">
    <location>
        <begin position="1153"/>
        <end position="1162"/>
    </location>
</feature>
<feature type="disulfide bond" evidence="4">
    <location>
        <begin position="1165"/>
        <end position="1176"/>
    </location>
</feature>
<feature type="disulfide bond" description="Interchain" evidence="13">
    <location>
        <position position="1179"/>
    </location>
</feature>
<feature type="disulfide bond" description="Interchain" evidence="13">
    <location>
        <position position="1182"/>
    </location>
</feature>
<feature type="disulfide bond" description="Interchain" evidence="13">
    <location>
        <position position="1785"/>
    </location>
</feature>
<feature type="sequence variant" id="VAR_061349" description="In dbSNP:rs28750165.">
    <original>P</original>
    <variation>S</variation>
    <location>
        <position position="379"/>
    </location>
</feature>
<feature type="sequence variant" id="VAR_014698" description="In dbSNP:rs20555.">
    <original>V</original>
    <variation>A</variation>
    <location>
        <position position="670"/>
    </location>
</feature>
<feature type="sequence variant" id="VAR_032774" description="In dbSNP:rs35710474.">
    <original>G</original>
    <variation>S</variation>
    <location>
        <position position="860"/>
    </location>
</feature>
<feature type="sequence variant" id="VAR_014699" description="In dbSNP:rs20556." evidence="9 12 14">
    <original>Q</original>
    <variation>R</variation>
    <location>
        <position position="1022"/>
    </location>
</feature>
<feature type="sequence conflict" description="In Ref. 5; AAA59487." evidence="13" ref="5">
    <original>L</original>
    <variation>V</variation>
    <location>
        <position position="1470"/>
    </location>
</feature>
<feature type="sequence conflict" description="In Ref. 5; AAA59487." evidence="13" ref="5">
    <original>E</original>
    <variation>G</variation>
    <location>
        <position position="1696"/>
    </location>
</feature>
<feature type="helix" evidence="15">
    <location>
        <begin position="1717"/>
        <end position="1784"/>
    </location>
</feature>
<accession>P07942</accession>
<accession>Q14D91</accession>
<comment type="function">
    <text evidence="10">Binding to cells via a high affinity receptor, laminin is thought to mediate the attachment, migration and organization of cells into tissues during embryonic development by interacting with other extracellular matrix components. Involved in the organization of the laminar architecture of cerebral cortex. It is probably required for the integrity of the basement membrane/glia limitans that serves as an anchor point for the endfeet of radial glial cells and as a physical barrier to migrating neurons. Radial glial cells play a central role in cerebral cortical development, where they act both as the proliferative unit of the cerebral cortex and a scaffold for neurons migrating toward the pial surface.</text>
</comment>
<comment type="subunit">
    <text evidence="2">Laminin is a complex glycoprotein, consisting of three different polypeptide chains (alpha, beta, gamma), which are bound to each other by disulfide bonds into a cross-shaped molecule comprising one long and three short arms with globules at each end. Beta-1 is a subunit of laminin-1 (laminin-111 or EHS laminin), laminin-2 (laminin-211 or merosin), laminin-6 (laminin-311 or K-laminin), laminin-8 (laminin-411), laminin-10 (laminin-511) and laminin-12 (laminin-213). Interacts with ITGB1 (By similarity).</text>
</comment>
<comment type="interaction">
    <interactant intactId="EBI-949174">
        <id>P07942</id>
    </interactant>
    <interactant intactId="EBI-7797864">
        <id>P11912</id>
        <label>CD79A</label>
    </interactant>
    <organismsDiffer>false</organismsDiffer>
    <experiments>3</experiments>
</comment>
<comment type="interaction">
    <interactant intactId="EBI-949174">
        <id>P07942</id>
    </interactant>
    <interactant intactId="EBI-13345167">
        <id>Q8TDT2</id>
        <label>GPR152</label>
    </interactant>
    <organismsDiffer>false</organismsDiffer>
    <experiments>3</experiments>
</comment>
<comment type="interaction">
    <interactant intactId="EBI-949174">
        <id>P07942</id>
    </interactant>
    <interactant intactId="EBI-6152746">
        <id>Q8IW75</id>
        <label>SERPINA12</label>
    </interactant>
    <organismsDiffer>false</organismsDiffer>
    <experiments>3</experiments>
</comment>
<comment type="interaction">
    <interactant intactId="EBI-949174">
        <id>P07942</id>
    </interactant>
    <interactant intactId="EBI-741480">
        <id>Q9UMX0</id>
        <label>UBQLN1</label>
    </interactant>
    <organismsDiffer>false</organismsDiffer>
    <experiments>3</experiments>
</comment>
<comment type="interaction">
    <interactant intactId="EBI-949174">
        <id>P07942</id>
    </interactant>
    <interactant intactId="EBI-16225951">
        <id>C5MBE7</id>
        <label>CTRG_03389</label>
    </interactant>
    <organismsDiffer>true</organismsDiffer>
    <experiments>2</experiments>
</comment>
<comment type="subcellular location">
    <subcellularLocation>
        <location>Secreted</location>
        <location>Extracellular space</location>
        <location>Extracellular matrix</location>
        <location>Basement membrane</location>
    </subcellularLocation>
    <text>Major component.</text>
</comment>
<comment type="domain">
    <text>The alpha-helical domains I and II are thought to interact with other laminin chains to form a coiled coil structure.</text>
</comment>
<comment type="domain">
    <text>Domains VI and IV are globular.</text>
</comment>
<comment type="disease" evidence="10">
    <disease id="DI-03744">
        <name>Lissencephaly 5</name>
        <acronym>LIS5</acronym>
        <description>An autosomal recessive brain malformation characterized by cobblestone changes in the cortex, more severe in the posterior region, and subcortical band heterotopia. Affected individuals have hydrocephalus, seizures, and severely delayed psychomotor development.</description>
        <dbReference type="MIM" id="615191"/>
    </disease>
    <text>The disease is caused by variants affecting the gene represented in this entry.</text>
</comment>
<reference key="1">
    <citation type="journal article" date="1990" name="J. Biol. Chem.">
        <title>Structure of the human laminin B1 chain gene.</title>
        <authorList>
            <person name="Vuolteenaho R."/>
            <person name="Chow L.T."/>
            <person name="Tryggvason K."/>
        </authorList>
    </citation>
    <scope>NUCLEOTIDE SEQUENCE [GENOMIC DNA]</scope>
    <scope>VARIANT ARG-1022</scope>
</reference>
<reference key="2">
    <citation type="journal article" date="1987" name="J. Biol. Chem.">
        <title>Human laminin B1 chain. A multidomain protein with gene (LAMB1) locus in the q22 region of chromosome 7.</title>
        <authorList>
            <person name="Pikkarainen T."/>
            <person name="Eddy R."/>
            <person name="Fukushima Y."/>
            <person name="Byers M."/>
            <person name="Shows T."/>
            <person name="Pihlajaniemi T."/>
            <person name="Saraste M."/>
            <person name="Tryggvason K."/>
        </authorList>
    </citation>
    <scope>NUCLEOTIDE SEQUENCE [MRNA]</scope>
    <scope>VARIANT ARG-1022</scope>
</reference>
<reference key="3">
    <citation type="journal article" date="2003" name="Science">
        <title>Human chromosome 7: DNA sequence and biology.</title>
        <authorList>
            <person name="Scherer S.W."/>
            <person name="Cheung J."/>
            <person name="MacDonald J.R."/>
            <person name="Osborne L.R."/>
            <person name="Nakabayashi K."/>
            <person name="Herbrick J.-A."/>
            <person name="Carson A.R."/>
            <person name="Parker-Katiraee L."/>
            <person name="Skaug J."/>
            <person name="Khaja R."/>
            <person name="Zhang J."/>
            <person name="Hudek A.K."/>
            <person name="Li M."/>
            <person name="Haddad M."/>
            <person name="Duggan G.E."/>
            <person name="Fernandez B.A."/>
            <person name="Kanematsu E."/>
            <person name="Gentles S."/>
            <person name="Christopoulos C.C."/>
            <person name="Choufani S."/>
            <person name="Kwasnicka D."/>
            <person name="Zheng X.H."/>
            <person name="Lai Z."/>
            <person name="Nusskern D.R."/>
            <person name="Zhang Q."/>
            <person name="Gu Z."/>
            <person name="Lu F."/>
            <person name="Zeesman S."/>
            <person name="Nowaczyk M.J."/>
            <person name="Teshima I."/>
            <person name="Chitayat D."/>
            <person name="Shuman C."/>
            <person name="Weksberg R."/>
            <person name="Zackai E.H."/>
            <person name="Grebe T.A."/>
            <person name="Cox S.R."/>
            <person name="Kirkpatrick S.J."/>
            <person name="Rahman N."/>
            <person name="Friedman J.M."/>
            <person name="Heng H.H.Q."/>
            <person name="Pelicci P.G."/>
            <person name="Lo-Coco F."/>
            <person name="Belloni E."/>
            <person name="Shaffer L.G."/>
            <person name="Pober B."/>
            <person name="Morton C.C."/>
            <person name="Gusella J.F."/>
            <person name="Bruns G.A.P."/>
            <person name="Korf B.R."/>
            <person name="Quade B.J."/>
            <person name="Ligon A.H."/>
            <person name="Ferguson H."/>
            <person name="Higgins A.W."/>
            <person name="Leach N.T."/>
            <person name="Herrick S.R."/>
            <person name="Lemyre E."/>
            <person name="Farra C.G."/>
            <person name="Kim H.-G."/>
            <person name="Summers A.M."/>
            <person name="Gripp K.W."/>
            <person name="Roberts W."/>
            <person name="Szatmari P."/>
            <person name="Winsor E.J.T."/>
            <person name="Grzeschik K.-H."/>
            <person name="Teebi A."/>
            <person name="Minassian B.A."/>
            <person name="Kere J."/>
            <person name="Armengol L."/>
            <person name="Pujana M.A."/>
            <person name="Estivill X."/>
            <person name="Wilson M.D."/>
            <person name="Koop B.F."/>
            <person name="Tosi S."/>
            <person name="Moore G.E."/>
            <person name="Boright A.P."/>
            <person name="Zlotorynski E."/>
            <person name="Kerem B."/>
            <person name="Kroisel P.M."/>
            <person name="Petek E."/>
            <person name="Oscier D.G."/>
            <person name="Mould S.J."/>
            <person name="Doehner H."/>
            <person name="Doehner K."/>
            <person name="Rommens J.M."/>
            <person name="Vincent J.B."/>
            <person name="Venter J.C."/>
            <person name="Li P.W."/>
            <person name="Mural R.J."/>
            <person name="Adams M.D."/>
            <person name="Tsui L.-C."/>
        </authorList>
    </citation>
    <scope>NUCLEOTIDE SEQUENCE [LARGE SCALE GENOMIC DNA]</scope>
</reference>
<reference key="4">
    <citation type="journal article" date="2004" name="Genome Res.">
        <title>The status, quality, and expansion of the NIH full-length cDNA project: the Mammalian Gene Collection (MGC).</title>
        <authorList>
            <consortium name="The MGC Project Team"/>
        </authorList>
    </citation>
    <scope>NUCLEOTIDE SEQUENCE [LARGE SCALE MRNA]</scope>
    <source>
        <tissue>Colon</tissue>
    </source>
</reference>
<reference key="5">
    <citation type="journal article" date="1987" name="Am. J. Hum. Genet.">
        <title>Isolation of a cDNA clone for the human laminin-B1 chain and its gene localization.</title>
        <authorList>
            <person name="Jaye M."/>
            <person name="Modi W.S."/>
            <person name="Ricca G.A."/>
            <person name="Mudd R."/>
            <person name="Chiu I.M."/>
            <person name="O'Brien S.J."/>
            <person name="Drohan W.N."/>
        </authorList>
    </citation>
    <scope>NUCLEOTIDE SEQUENCE [MRNA] OF 1276-1709</scope>
</reference>
<reference key="6">
    <citation type="journal article" date="2005" name="J. Proteome Res.">
        <title>Human plasma N-glycoproteome analysis by immunoaffinity subtraction, hydrazide chemistry, and mass spectrometry.</title>
        <authorList>
            <person name="Liu T."/>
            <person name="Qian W.-J."/>
            <person name="Gritsenko M.A."/>
            <person name="Camp D.G. II"/>
            <person name="Monroe M.E."/>
            <person name="Moore R.J."/>
            <person name="Smith R.D."/>
        </authorList>
    </citation>
    <scope>GLYCOSYLATION [LARGE SCALE ANALYSIS] AT ASN-1279</scope>
    <source>
        <tissue>Plasma</tissue>
    </source>
</reference>
<reference key="7">
    <citation type="journal article" date="2009" name="J. Proteome Res.">
        <title>Glycoproteomics analysis of human liver tissue by combination of multiple enzyme digestion and hydrazide chemistry.</title>
        <authorList>
            <person name="Chen R."/>
            <person name="Jiang X."/>
            <person name="Sun D."/>
            <person name="Han G."/>
            <person name="Wang F."/>
            <person name="Ye M."/>
            <person name="Wang L."/>
            <person name="Zou H."/>
        </authorList>
    </citation>
    <scope>GLYCOSYLATION [LARGE SCALE ANALYSIS] AT ASN-1279</scope>
    <source>
        <tissue>Liver</tissue>
    </source>
</reference>
<reference key="8">
    <citation type="journal article" date="2013" name="Am. J. Hum. Genet.">
        <title>Mutations in LAMB1 cause cobblestone brain malformation without muscular or ocular abnormalities.</title>
        <authorList>
            <person name="Radmanesh F."/>
            <person name="Caglayan A.O."/>
            <person name="Silhavy J.L."/>
            <person name="Yilmaz C."/>
            <person name="Cantagrel V."/>
            <person name="Omar T."/>
            <person name="Rosti B."/>
            <person name="Kaymakcalan H."/>
            <person name="Gabriel S."/>
            <person name="Li M."/>
            <person name="Sestan N."/>
            <person name="Bilguvar K."/>
            <person name="Dobyns W.B."/>
            <person name="Zaki M.S."/>
            <person name="Gunel M."/>
            <person name="Gleeson J.G."/>
        </authorList>
    </citation>
    <scope>INVOLVEMENT IN LIS5</scope>
    <scope>FUNCTION</scope>
</reference>
<reference key="9">
    <citation type="journal article" date="2014" name="J. Proteomics">
        <title>An enzyme assisted RP-RPLC approach for in-depth analysis of human liver phosphoproteome.</title>
        <authorList>
            <person name="Bian Y."/>
            <person name="Song C."/>
            <person name="Cheng K."/>
            <person name="Dong M."/>
            <person name="Wang F."/>
            <person name="Huang J."/>
            <person name="Sun D."/>
            <person name="Wang L."/>
            <person name="Ye M."/>
            <person name="Zou H."/>
        </authorList>
    </citation>
    <scope>IDENTIFICATION BY MASS SPECTROMETRY [LARGE SCALE ANALYSIS]</scope>
    <source>
        <tissue>Liver</tissue>
    </source>
</reference>
<reference key="10">
    <citation type="journal article" date="2015" name="Cell">
        <title>A single kinase generates the majority of the secreted phosphoproteome.</title>
        <authorList>
            <person name="Tagliabracci V.S."/>
            <person name="Wiley S.E."/>
            <person name="Guo X."/>
            <person name="Kinch L.N."/>
            <person name="Durrant E."/>
            <person name="Wen J."/>
            <person name="Xiao J."/>
            <person name="Cui J."/>
            <person name="Nguyen K.B."/>
            <person name="Engel J.L."/>
            <person name="Coon J.J."/>
            <person name="Grishin N."/>
            <person name="Pinna L.A."/>
            <person name="Pagliarini D.J."/>
            <person name="Dixon J.E."/>
        </authorList>
    </citation>
    <scope>PHOSPHORYLATION AT SER-1478; SER-1496; SER-1666 AND SER-1682</scope>
</reference>
<reference key="11">
    <citation type="journal article" date="2011" name="BMC Syst. Biol.">
        <title>Initial characterization of the human central proteome.</title>
        <authorList>
            <person name="Burkard T.R."/>
            <person name="Planyavsky M."/>
            <person name="Kaupe I."/>
            <person name="Breitwieser F.P."/>
            <person name="Buerckstuemmer T."/>
            <person name="Bennett K.L."/>
            <person name="Superti-Furga G."/>
            <person name="Colinge J."/>
        </authorList>
    </citation>
    <scope>VARIANT [LARGE SCALE ANALYSIS] ARG-1022</scope>
    <scope>IDENTIFICATION BY MASS SPECTROMETRY [LARGE SCALE ANALYSIS]</scope>
</reference>
<evidence type="ECO:0000250" key="1">
    <source>
        <dbReference type="UniProtKB" id="P02469"/>
    </source>
</evidence>
<evidence type="ECO:0000250" key="2">
    <source>
        <dbReference type="UniProtKB" id="Q01635"/>
    </source>
</evidence>
<evidence type="ECO:0000255" key="3"/>
<evidence type="ECO:0000255" key="4">
    <source>
        <dbReference type="PROSITE-ProRule" id="PRU00460"/>
    </source>
</evidence>
<evidence type="ECO:0000255" key="5">
    <source>
        <dbReference type="PROSITE-ProRule" id="PRU00462"/>
    </source>
</evidence>
<evidence type="ECO:0000255" key="6">
    <source>
        <dbReference type="PROSITE-ProRule" id="PRU00466"/>
    </source>
</evidence>
<evidence type="ECO:0000269" key="7">
    <source>
    </source>
</evidence>
<evidence type="ECO:0000269" key="8">
    <source>
    </source>
</evidence>
<evidence type="ECO:0000269" key="9">
    <source>
    </source>
</evidence>
<evidence type="ECO:0000269" key="10">
    <source>
    </source>
</evidence>
<evidence type="ECO:0000269" key="11">
    <source>
    </source>
</evidence>
<evidence type="ECO:0000269" key="12">
    <source>
    </source>
</evidence>
<evidence type="ECO:0000305" key="13"/>
<evidence type="ECO:0007744" key="14">
    <source>
    </source>
</evidence>
<evidence type="ECO:0007829" key="15">
    <source>
        <dbReference type="PDB" id="5XAU"/>
    </source>
</evidence>
<protein>
    <recommendedName>
        <fullName>Laminin subunit beta-1</fullName>
    </recommendedName>
    <alternativeName>
        <fullName>Laminin B1 chain</fullName>
    </alternativeName>
    <alternativeName>
        <fullName>Laminin-1 subunit beta</fullName>
    </alternativeName>
    <alternativeName>
        <fullName>Laminin-10 subunit beta</fullName>
    </alternativeName>
    <alternativeName>
        <fullName>Laminin-12 subunit beta</fullName>
    </alternativeName>
    <alternativeName>
        <fullName>Laminin-2 subunit beta</fullName>
    </alternativeName>
    <alternativeName>
        <fullName>Laminin-6 subunit beta</fullName>
    </alternativeName>
    <alternativeName>
        <fullName>Laminin-8 subunit beta</fullName>
    </alternativeName>
</protein>
<name>LAMB1_HUMAN</name>
<sequence length="1786" mass="198038">MGLLQLLAFSFLALCRARVRAQEPEFSYGCAEGSCYPATGDLLIGRAQKLSVTSTCGLHKPEPYCIVSHLQEDKKCFICNSQDPYHETLNPDSHLIENVVTTFAPNRLKIWWQSENGVENVTIQLDLEAEFHFTHLIMTFKTFRPAAMLIERSSDFGKTWGVYRYFAYDCEASFPGISTGPMKKVDDIICDSRYSDIEPSTEGEVIFRALDPAFKIEDPYSPRIQNLLKITNLRIKFVKLHTLGDNLLDSRMEIREKYYYAVYDMVVRGNCFCYGHASECAPVDGFNEEVEGMVHGHCMCRHNTKGLNCELCMDFYHDLPWRPAEGRNSNACKKCNCNEHSISCHFDMAVYLATGNVSGGVCDDCQHNTMGRNCEQCKPFYYQHPERDIRDPNFCERCTCDPAGSQNEGICDSYTDFSTGLIAGQCRCKLNVEGEHCDVCKEGFYDLSSEDPFGCKSCACNPLGTIPGGNPCDSETGHCYCKRLVTGQHCDQCLPEHWGLSNDLDGCRPCDCDLGGALNNSCFAESGQCSCRPHMIGRQCNEVEPGYYFATLDHYLYEAEEANLGPGVSIVERQYIQDRIPSWTGAGFVRVPEGAYLEFFIDNIPYSMEYDILIRYEPQLPDHWEKAVITVQRPGRIPTSSRCGNTIPDDDNQVVSLSPGSRYVVLPRPVCFEKGTNYTVRLELPQYTSSDSDVESPYTLIDSLVLMPYCKSLDIFTVGGSGDGVVTNSAWETFQRYRCLENSRSVVKTPMTDVCRNIIFSISALLHQTGLACECDPQGSLSSVCDPNGGQCQCRPNVVGRTCNRCAPGTFGFGPSGCKPCECHLQGSVNAFCNPVTGQCHCFQGVYARQCDRCLPGHWGFPSCQPCQCNGHADDCDPVTGECLNCQDYTMGHNCERCLAGYYGDPIIGSGDHCRPCPCPDGPDSGRQFARSCYQDPVTLQLACVCDPGYIGSRCDDCASGYFGNPSEVGGSCQPCQCHNNIDTTDPEACDKETGRCLKCLYHTEGEHCQFCRFGYYGDALQQDCRKCVCNYLGTVQEHCNGSDCQCDKATGQCLCLPNVIGQNCDRCAPNTWQLASGTGCDPCNCNAAHSFGPSCNEFTGQCQCMPGFGGRTCSECQELFWGDPDVECRACDCDPRGIETPQCDQSTGQCVCVEGVEGPRCDKCTRGYSGVFPDCTPCHQCFALWDVIIAELTNRTHRFLEKAKALKISGVIGPYRETVDSVERKVSEIKDILAQSPAAEPLKNIGNLFEEAEKLIKDVTEMMAQVEVKLSDTTSQSNSTAKELDSLQTEAESLDNTVKELAEQLEFIKNSDIRGALDSITKYFQMSLEAEERVNASTTEPNSTVEQSALMRDRVEDVMMERESQFKEKQEEQARLLDELAGKLQSLDLSAAAEMTCGTPPGASCSETECGGPNCRTDEGERKCGGPGCGGLVTVAHNAWQKAMDLDQDVLSALAEVEQLSKMVSEAKLRADEAKQSAEDILLKTNATKEKMDKSNEELRNLIKQIRNFLTQDSADLDSIEAVANEVLKMEMPSTPQQLQNLTEDIRERVESLSQVEVILQHSAADIARAEMLLEEAKRASKSATDVKVTADMVKEALEEAEKAQVAAEKAIKQADEDIQGTQNLLTSIESETAASEETLFNASQRISELERNVEELKRKAAQNSGEAEYIEKVVYTVKQSAEDVKKTLDGELDEKYKKVENLIAKKTEESADARRKAEMLQNEAKTLLAQANSKLQLLKDLERKYEDNQRYLEDKAQELARLEGEVRSLLKDISQKVAVYSTCL</sequence>